<comment type="catalytic activity">
    <reaction evidence="1">
        <text>a quinone + NADH + H(+) = a quinol + NAD(+)</text>
        <dbReference type="Rhea" id="RHEA:46160"/>
        <dbReference type="ChEBI" id="CHEBI:15378"/>
        <dbReference type="ChEBI" id="CHEBI:24646"/>
        <dbReference type="ChEBI" id="CHEBI:57540"/>
        <dbReference type="ChEBI" id="CHEBI:57945"/>
        <dbReference type="ChEBI" id="CHEBI:132124"/>
        <dbReference type="EC" id="1.6.5.2"/>
    </reaction>
</comment>
<comment type="catalytic activity">
    <reaction evidence="1">
        <text>a quinone + NADPH + H(+) = a quinol + NADP(+)</text>
        <dbReference type="Rhea" id="RHEA:46164"/>
        <dbReference type="ChEBI" id="CHEBI:15378"/>
        <dbReference type="ChEBI" id="CHEBI:24646"/>
        <dbReference type="ChEBI" id="CHEBI:57783"/>
        <dbReference type="ChEBI" id="CHEBI:58349"/>
        <dbReference type="ChEBI" id="CHEBI:132124"/>
        <dbReference type="EC" id="1.6.5.2"/>
    </reaction>
</comment>
<comment type="cofactor">
    <cofactor evidence="1">
        <name>FMN</name>
        <dbReference type="ChEBI" id="CHEBI:58210"/>
    </cofactor>
    <text evidence="1">Binds 1 FMN per monomer.</text>
</comment>
<comment type="similarity">
    <text evidence="1">Belongs to the WrbA family.</text>
</comment>
<dbReference type="EC" id="1.6.5.2" evidence="1"/>
<dbReference type="EMBL" id="CP000478">
    <property type="protein sequence ID" value="ABK19060.1"/>
    <property type="molecule type" value="Genomic_DNA"/>
</dbReference>
<dbReference type="RefSeq" id="WP_011700185.1">
    <property type="nucleotide sequence ID" value="NC_008554.1"/>
</dbReference>
<dbReference type="SMR" id="A0LNQ8"/>
<dbReference type="FunCoup" id="A0LNQ8">
    <property type="interactions" value="325"/>
</dbReference>
<dbReference type="STRING" id="335543.Sfum_3387"/>
<dbReference type="CAZy" id="AA6">
    <property type="family name" value="Auxiliary Activities 6"/>
</dbReference>
<dbReference type="KEGG" id="sfu:Sfum_3387"/>
<dbReference type="eggNOG" id="COG0655">
    <property type="taxonomic scope" value="Bacteria"/>
</dbReference>
<dbReference type="HOGENOM" id="CLU_051402_0_2_7"/>
<dbReference type="InParanoid" id="A0LNQ8"/>
<dbReference type="OrthoDB" id="9801479at2"/>
<dbReference type="Proteomes" id="UP000001784">
    <property type="component" value="Chromosome"/>
</dbReference>
<dbReference type="GO" id="GO:0016020">
    <property type="term" value="C:membrane"/>
    <property type="evidence" value="ECO:0007669"/>
    <property type="project" value="TreeGrafter"/>
</dbReference>
<dbReference type="GO" id="GO:0050660">
    <property type="term" value="F:flavin adenine dinucleotide binding"/>
    <property type="evidence" value="ECO:0007669"/>
    <property type="project" value="UniProtKB-UniRule"/>
</dbReference>
<dbReference type="GO" id="GO:0010181">
    <property type="term" value="F:FMN binding"/>
    <property type="evidence" value="ECO:0007669"/>
    <property type="project" value="InterPro"/>
</dbReference>
<dbReference type="GO" id="GO:0051287">
    <property type="term" value="F:NAD binding"/>
    <property type="evidence" value="ECO:0007669"/>
    <property type="project" value="UniProtKB-UniRule"/>
</dbReference>
<dbReference type="GO" id="GO:0050136">
    <property type="term" value="F:NADH:ubiquinone reductase (non-electrogenic) activity"/>
    <property type="evidence" value="ECO:0007669"/>
    <property type="project" value="RHEA"/>
</dbReference>
<dbReference type="GO" id="GO:0050661">
    <property type="term" value="F:NADP binding"/>
    <property type="evidence" value="ECO:0007669"/>
    <property type="project" value="UniProtKB-UniRule"/>
</dbReference>
<dbReference type="GO" id="GO:0008753">
    <property type="term" value="F:NADPH dehydrogenase (quinone) activity"/>
    <property type="evidence" value="ECO:0007669"/>
    <property type="project" value="RHEA"/>
</dbReference>
<dbReference type="FunFam" id="3.40.50.360:FF:000001">
    <property type="entry name" value="NAD(P)H dehydrogenase (Quinone) FQR1-like"/>
    <property type="match status" value="1"/>
</dbReference>
<dbReference type="Gene3D" id="3.40.50.360">
    <property type="match status" value="1"/>
</dbReference>
<dbReference type="HAMAP" id="MF_01017">
    <property type="entry name" value="NQOR"/>
    <property type="match status" value="1"/>
</dbReference>
<dbReference type="InterPro" id="IPR008254">
    <property type="entry name" value="Flavodoxin/NO_synth"/>
</dbReference>
<dbReference type="InterPro" id="IPR029039">
    <property type="entry name" value="Flavoprotein-like_sf"/>
</dbReference>
<dbReference type="InterPro" id="IPR010089">
    <property type="entry name" value="Flavoprotein_WrbA-like"/>
</dbReference>
<dbReference type="InterPro" id="IPR005025">
    <property type="entry name" value="FMN_Rdtase-like_dom"/>
</dbReference>
<dbReference type="InterPro" id="IPR037513">
    <property type="entry name" value="NQO"/>
</dbReference>
<dbReference type="NCBIfam" id="TIGR01755">
    <property type="entry name" value="flav_wrbA"/>
    <property type="match status" value="1"/>
</dbReference>
<dbReference type="NCBIfam" id="NF002999">
    <property type="entry name" value="PRK03767.1"/>
    <property type="match status" value="1"/>
</dbReference>
<dbReference type="PANTHER" id="PTHR30546">
    <property type="entry name" value="FLAVODOXIN-RELATED PROTEIN WRBA-RELATED"/>
    <property type="match status" value="1"/>
</dbReference>
<dbReference type="PANTHER" id="PTHR30546:SF23">
    <property type="entry name" value="FLAVOPROTEIN-LIKE PROTEIN YCP4-RELATED"/>
    <property type="match status" value="1"/>
</dbReference>
<dbReference type="Pfam" id="PF03358">
    <property type="entry name" value="FMN_red"/>
    <property type="match status" value="1"/>
</dbReference>
<dbReference type="SUPFAM" id="SSF52218">
    <property type="entry name" value="Flavoproteins"/>
    <property type="match status" value="1"/>
</dbReference>
<dbReference type="PROSITE" id="PS50902">
    <property type="entry name" value="FLAVODOXIN_LIKE"/>
    <property type="match status" value="1"/>
</dbReference>
<protein>
    <recommendedName>
        <fullName evidence="1">NAD(P)H dehydrogenase (quinone)</fullName>
        <ecNumber evidence="1">1.6.5.2</ecNumber>
    </recommendedName>
    <alternativeName>
        <fullName>Flavoprotein WrbA</fullName>
    </alternativeName>
    <alternativeName>
        <fullName evidence="1">NAD(P)H:quinone oxidoreductase</fullName>
        <shortName evidence="1">NQO</shortName>
    </alternativeName>
</protein>
<reference key="1">
    <citation type="submission" date="2006-10" db="EMBL/GenBank/DDBJ databases">
        <title>Complete sequence of Syntrophobacter fumaroxidans MPOB.</title>
        <authorList>
            <consortium name="US DOE Joint Genome Institute"/>
            <person name="Copeland A."/>
            <person name="Lucas S."/>
            <person name="Lapidus A."/>
            <person name="Barry K."/>
            <person name="Detter J.C."/>
            <person name="Glavina del Rio T."/>
            <person name="Hammon N."/>
            <person name="Israni S."/>
            <person name="Pitluck S."/>
            <person name="Goltsman E.G."/>
            <person name="Martinez M."/>
            <person name="Schmutz J."/>
            <person name="Larimer F."/>
            <person name="Land M."/>
            <person name="Hauser L."/>
            <person name="Kyrpides N."/>
            <person name="Kim E."/>
            <person name="Boone D.R."/>
            <person name="Brockman F."/>
            <person name="Culley D."/>
            <person name="Ferry J."/>
            <person name="Gunsalus R."/>
            <person name="McInerney M.J."/>
            <person name="Morrison M."/>
            <person name="Plugge C."/>
            <person name="Rohlin L."/>
            <person name="Scholten J."/>
            <person name="Sieber J."/>
            <person name="Stams A.J.M."/>
            <person name="Worm P."/>
            <person name="Henstra A.M."/>
            <person name="Richardson P."/>
        </authorList>
    </citation>
    <scope>NUCLEOTIDE SEQUENCE [LARGE SCALE GENOMIC DNA]</scope>
    <source>
        <strain>DSM 10017 / MPOB</strain>
    </source>
</reference>
<organism>
    <name type="scientific">Syntrophobacter fumaroxidans (strain DSM 10017 / MPOB)</name>
    <dbReference type="NCBI Taxonomy" id="335543"/>
    <lineage>
        <taxon>Bacteria</taxon>
        <taxon>Pseudomonadati</taxon>
        <taxon>Thermodesulfobacteriota</taxon>
        <taxon>Syntrophobacteria</taxon>
        <taxon>Syntrophobacterales</taxon>
        <taxon>Syntrophobacteraceae</taxon>
        <taxon>Syntrophobacter</taxon>
    </lineage>
</organism>
<sequence length="204" mass="21679">MKVLIVFYSMYGHIYRMAEAVAEGVRSVDGAEAVLRRVPETLSAEILASMGATEAQKQFAHIPVCTVDELGAADAVIFGTPTRFGNMAGQMRQFLDATGRLWVSGALVGKAGSVFTSSNTQHGGQESTILSFHINLLHQGMVIVGLPYSFQGQSTMDEITGGSPYGASTIAGPTGARTPSDNELAGARYQGRHVAEIARKLTRN</sequence>
<keyword id="KW-0285">Flavoprotein</keyword>
<keyword id="KW-0288">FMN</keyword>
<keyword id="KW-0520">NAD</keyword>
<keyword id="KW-0521">NADP</keyword>
<keyword id="KW-0547">Nucleotide-binding</keyword>
<keyword id="KW-0560">Oxidoreductase</keyword>
<keyword id="KW-1185">Reference proteome</keyword>
<proteinExistence type="inferred from homology"/>
<evidence type="ECO:0000255" key="1">
    <source>
        <dbReference type="HAMAP-Rule" id="MF_01017"/>
    </source>
</evidence>
<name>NQOR_SYNFM</name>
<gene>
    <name type="ordered locus">Sfum_3387</name>
</gene>
<accession>A0LNQ8</accession>
<feature type="chain" id="PRO_0000291033" description="NAD(P)H dehydrogenase (quinone)">
    <location>
        <begin position="1"/>
        <end position="204"/>
    </location>
</feature>
<feature type="domain" description="Flavodoxin-like" evidence="1">
    <location>
        <begin position="3"/>
        <end position="194"/>
    </location>
</feature>
<feature type="binding site" evidence="1">
    <location>
        <begin position="9"/>
        <end position="14"/>
    </location>
    <ligand>
        <name>FMN</name>
        <dbReference type="ChEBI" id="CHEBI:58210"/>
    </ligand>
</feature>
<feature type="binding site" evidence="1">
    <location>
        <position position="11"/>
    </location>
    <ligand>
        <name>NAD(+)</name>
        <dbReference type="ChEBI" id="CHEBI:57540"/>
    </ligand>
</feature>
<feature type="binding site" evidence="1">
    <location>
        <begin position="82"/>
        <end position="84"/>
    </location>
    <ligand>
        <name>FMN</name>
        <dbReference type="ChEBI" id="CHEBI:58210"/>
    </ligand>
</feature>
<feature type="binding site" evidence="1">
    <location>
        <position position="102"/>
    </location>
    <ligand>
        <name>substrate</name>
    </ligand>
</feature>
<feature type="binding site" evidence="1">
    <location>
        <position position="138"/>
    </location>
    <ligand>
        <name>FMN</name>
        <dbReference type="ChEBI" id="CHEBI:58210"/>
    </ligand>
</feature>